<keyword id="KW-0028">Amino-acid biosynthesis</keyword>
<keyword id="KW-0368">Histidine biosynthesis</keyword>
<keyword id="KW-0456">Lyase</keyword>
<comment type="catalytic activity">
    <reaction>
        <text>D-erythro-1-(imidazol-4-yl)glycerol 3-phosphate = 3-(imidazol-4-yl)-2-oxopropyl phosphate + H2O</text>
        <dbReference type="Rhea" id="RHEA:11040"/>
        <dbReference type="ChEBI" id="CHEBI:15377"/>
        <dbReference type="ChEBI" id="CHEBI:57766"/>
        <dbReference type="ChEBI" id="CHEBI:58278"/>
        <dbReference type="EC" id="4.2.1.19"/>
    </reaction>
</comment>
<comment type="pathway">
    <text>Amino-acid biosynthesis; L-histidine biosynthesis; L-histidine from 5-phospho-alpha-D-ribose 1-diphosphate: step 6/9.</text>
</comment>
<comment type="similarity">
    <text evidence="1">Belongs to the imidazoleglycerol-phosphate dehydratase family.</text>
</comment>
<organism>
    <name type="scientific">Candida albicans</name>
    <name type="common">Yeast</name>
    <dbReference type="NCBI Taxonomy" id="5476"/>
    <lineage>
        <taxon>Eukaryota</taxon>
        <taxon>Fungi</taxon>
        <taxon>Dikarya</taxon>
        <taxon>Ascomycota</taxon>
        <taxon>Saccharomycotina</taxon>
        <taxon>Pichiomycetes</taxon>
        <taxon>Debaryomycetaceae</taxon>
        <taxon>Candida/Lodderomyces clade</taxon>
        <taxon>Candida</taxon>
    </lineage>
</organism>
<accession>P56090</accession>
<feature type="chain" id="PRO_0000158234" description="Imidazoleglycerol-phosphate dehydratase">
    <location>
        <begin position="1"/>
        <end position="223"/>
    </location>
</feature>
<dbReference type="EC" id="4.2.1.19"/>
<dbReference type="EMBL" id="AF006605">
    <property type="protein sequence ID" value="AAB62822.1"/>
    <property type="molecule type" value="Genomic_DNA"/>
</dbReference>
<dbReference type="SMR" id="P56090"/>
<dbReference type="VEuPathDB" id="FungiDB:C2_04810W_A"/>
<dbReference type="VEuPathDB" id="FungiDB:CAWG_04238"/>
<dbReference type="UniPathway" id="UPA00031">
    <property type="reaction ID" value="UER00011"/>
</dbReference>
<dbReference type="GO" id="GO:0004424">
    <property type="term" value="F:imidazoleglycerol-phosphate dehydratase activity"/>
    <property type="evidence" value="ECO:0007669"/>
    <property type="project" value="UniProtKB-EC"/>
</dbReference>
<dbReference type="GO" id="GO:0000105">
    <property type="term" value="P:L-histidine biosynthetic process"/>
    <property type="evidence" value="ECO:0007669"/>
    <property type="project" value="UniProtKB-UniPathway"/>
</dbReference>
<dbReference type="CDD" id="cd07914">
    <property type="entry name" value="IGPD"/>
    <property type="match status" value="1"/>
</dbReference>
<dbReference type="FunFam" id="3.30.230.40:FF:000005">
    <property type="entry name" value="Imidazoleglycerol-phosphate dehydratase"/>
    <property type="match status" value="1"/>
</dbReference>
<dbReference type="FunFam" id="3.30.230.40:FF:000001">
    <property type="entry name" value="Imidazoleglycerol-phosphate dehydratase HisB"/>
    <property type="match status" value="1"/>
</dbReference>
<dbReference type="Gene3D" id="3.30.230.40">
    <property type="entry name" value="Imidazole glycerol phosphate dehydratase, domain 1"/>
    <property type="match status" value="2"/>
</dbReference>
<dbReference type="HAMAP" id="MF_00076">
    <property type="entry name" value="HisB"/>
    <property type="match status" value="1"/>
</dbReference>
<dbReference type="InterPro" id="IPR038494">
    <property type="entry name" value="IGPD_sf"/>
</dbReference>
<dbReference type="InterPro" id="IPR000807">
    <property type="entry name" value="ImidazoleglycerolP_deHydtase"/>
</dbReference>
<dbReference type="InterPro" id="IPR020565">
    <property type="entry name" value="ImidazoleglycerP_deHydtase_CS"/>
</dbReference>
<dbReference type="InterPro" id="IPR020568">
    <property type="entry name" value="Ribosomal_Su5_D2-typ_SF"/>
</dbReference>
<dbReference type="NCBIfam" id="NF002114">
    <property type="entry name" value="PRK00951.2-4"/>
    <property type="match status" value="1"/>
</dbReference>
<dbReference type="PANTHER" id="PTHR23133:SF2">
    <property type="entry name" value="IMIDAZOLEGLYCEROL-PHOSPHATE DEHYDRATASE"/>
    <property type="match status" value="1"/>
</dbReference>
<dbReference type="PANTHER" id="PTHR23133">
    <property type="entry name" value="IMIDAZOLEGLYCEROL-PHOSPHATE DEHYDRATASE HIS7"/>
    <property type="match status" value="1"/>
</dbReference>
<dbReference type="Pfam" id="PF00475">
    <property type="entry name" value="IGPD"/>
    <property type="match status" value="1"/>
</dbReference>
<dbReference type="SUPFAM" id="SSF54211">
    <property type="entry name" value="Ribosomal protein S5 domain 2-like"/>
    <property type="match status" value="2"/>
</dbReference>
<dbReference type="PROSITE" id="PS00954">
    <property type="entry name" value="IGP_DEHYDRATASE_1"/>
    <property type="match status" value="1"/>
</dbReference>
<dbReference type="PROSITE" id="PS00955">
    <property type="entry name" value="IGP_DEHYDRATASE_2"/>
    <property type="match status" value="1"/>
</dbReference>
<reference key="1">
    <citation type="submission" date="1997-06" db="EMBL/GenBank/DDBJ databases">
        <authorList>
            <person name="Grindle S."/>
            <person name="Magee B.B."/>
            <person name="Gorman J.A."/>
        </authorList>
    </citation>
    <scope>NUCLEOTIDE SEQUENCE [GENOMIC DNA]</scope>
    <source>
        <strain>ATCC 11651 / B792 / 171D</strain>
    </source>
</reference>
<evidence type="ECO:0000305" key="1"/>
<sequence>MSREALINRITNETKIQIALNLDGGKLELKESIFPNQSIIIDEHHAKQVSGSQYINVQTGIGFLDHMIHALAKHSGWSLIVECIGDLHIDDHHTAEDVGISLGMAFKQALGQIKGVKRFGHGFAPLDEALSRAVVDLSNRPFAVIELGLKREKIGDLSTEMIPHVLESFAGAVGITIHVDCLRGFNDHHRAESAFKALAIAIKEAISKTGKNDIPSTKGVLSK</sequence>
<proteinExistence type="inferred from homology"/>
<name>HIS7_CANAX</name>
<protein>
    <recommendedName>
        <fullName>Imidazoleglycerol-phosphate dehydratase</fullName>
        <shortName>IGPD</shortName>
        <ecNumber>4.2.1.19</ecNumber>
    </recommendedName>
</protein>
<gene>
    <name type="primary">HIS3</name>
</gene>